<proteinExistence type="inferred from homology"/>
<protein>
    <recommendedName>
        <fullName evidence="1">ATP synthase subunit b</fullName>
    </recommendedName>
    <alternativeName>
        <fullName evidence="1">ATP synthase F(0) sector subunit b</fullName>
    </alternativeName>
    <alternativeName>
        <fullName evidence="1">ATPase subunit I</fullName>
    </alternativeName>
    <alternativeName>
        <fullName evidence="1">F-type ATPase subunit b</fullName>
        <shortName evidence="1">F-ATPase subunit b</shortName>
    </alternativeName>
</protein>
<gene>
    <name evidence="1" type="primary">atpF</name>
    <name type="ordered locus">BCG9842_B5520</name>
</gene>
<name>ATPF_BACC2</name>
<sequence>MPTLLLGAAIPFGTIAYTLFIFLILLVMLRKFAWGPLMGIMKEREEHVTNEIDAAERSNAEAKKLVEEQREMLKQSRVEAQELIERAKKQAVDQKDVIVAAAKEEAESIKASAVQEIQREKEQAIAALQEQVASLSVQIASKVIEKELKEEDQVKLIRDYIKEVGEAR</sequence>
<organism>
    <name type="scientific">Bacillus cereus (strain G9842)</name>
    <dbReference type="NCBI Taxonomy" id="405531"/>
    <lineage>
        <taxon>Bacteria</taxon>
        <taxon>Bacillati</taxon>
        <taxon>Bacillota</taxon>
        <taxon>Bacilli</taxon>
        <taxon>Bacillales</taxon>
        <taxon>Bacillaceae</taxon>
        <taxon>Bacillus</taxon>
        <taxon>Bacillus cereus group</taxon>
    </lineage>
</organism>
<accession>B7IQW2</accession>
<comment type="function">
    <text evidence="1">F(1)F(0) ATP synthase produces ATP from ADP in the presence of a proton or sodium gradient. F-type ATPases consist of two structural domains, F(1) containing the extramembraneous catalytic core and F(0) containing the membrane proton channel, linked together by a central stalk and a peripheral stalk. During catalysis, ATP synthesis in the catalytic domain of F(1) is coupled via a rotary mechanism of the central stalk subunits to proton translocation.</text>
</comment>
<comment type="function">
    <text evidence="1">Component of the F(0) channel, it forms part of the peripheral stalk, linking F(1) to F(0).</text>
</comment>
<comment type="subunit">
    <text evidence="1">F-type ATPases have 2 components, F(1) - the catalytic core - and F(0) - the membrane proton channel. F(1) has five subunits: alpha(3), beta(3), gamma(1), delta(1), epsilon(1). F(0) has three main subunits: a(1), b(2) and c(10-14). The alpha and beta chains form an alternating ring which encloses part of the gamma chain. F(1) is attached to F(0) by a central stalk formed by the gamma and epsilon chains, while a peripheral stalk is formed by the delta and b chains.</text>
</comment>
<comment type="subcellular location">
    <subcellularLocation>
        <location evidence="1">Cell membrane</location>
        <topology evidence="1">Single-pass membrane protein</topology>
    </subcellularLocation>
</comment>
<comment type="similarity">
    <text evidence="1">Belongs to the ATPase B chain family.</text>
</comment>
<evidence type="ECO:0000255" key="1">
    <source>
        <dbReference type="HAMAP-Rule" id="MF_01398"/>
    </source>
</evidence>
<keyword id="KW-0066">ATP synthesis</keyword>
<keyword id="KW-1003">Cell membrane</keyword>
<keyword id="KW-0138">CF(0)</keyword>
<keyword id="KW-0375">Hydrogen ion transport</keyword>
<keyword id="KW-0406">Ion transport</keyword>
<keyword id="KW-0472">Membrane</keyword>
<keyword id="KW-0812">Transmembrane</keyword>
<keyword id="KW-1133">Transmembrane helix</keyword>
<keyword id="KW-0813">Transport</keyword>
<reference key="1">
    <citation type="submission" date="2008-10" db="EMBL/GenBank/DDBJ databases">
        <title>Genome sequence of Bacillus cereus G9842.</title>
        <authorList>
            <person name="Dodson R.J."/>
            <person name="Durkin A.S."/>
            <person name="Rosovitz M.J."/>
            <person name="Rasko D.A."/>
            <person name="Hoffmaster A."/>
            <person name="Ravel J."/>
            <person name="Sutton G."/>
        </authorList>
    </citation>
    <scope>NUCLEOTIDE SEQUENCE [LARGE SCALE GENOMIC DNA]</scope>
    <source>
        <strain>G9842</strain>
    </source>
</reference>
<dbReference type="EMBL" id="CP001186">
    <property type="protein sequence ID" value="ACK97563.1"/>
    <property type="molecule type" value="Genomic_DNA"/>
</dbReference>
<dbReference type="RefSeq" id="WP_001142615.1">
    <property type="nucleotide sequence ID" value="NC_011772.1"/>
</dbReference>
<dbReference type="SMR" id="B7IQW2"/>
<dbReference type="GeneID" id="72451960"/>
<dbReference type="KEGG" id="bcg:BCG9842_B5520"/>
<dbReference type="HOGENOM" id="CLU_079215_4_2_9"/>
<dbReference type="Proteomes" id="UP000006744">
    <property type="component" value="Chromosome"/>
</dbReference>
<dbReference type="GO" id="GO:0005886">
    <property type="term" value="C:plasma membrane"/>
    <property type="evidence" value="ECO:0007669"/>
    <property type="project" value="UniProtKB-SubCell"/>
</dbReference>
<dbReference type="GO" id="GO:0045259">
    <property type="term" value="C:proton-transporting ATP synthase complex"/>
    <property type="evidence" value="ECO:0007669"/>
    <property type="project" value="UniProtKB-KW"/>
</dbReference>
<dbReference type="GO" id="GO:0046933">
    <property type="term" value="F:proton-transporting ATP synthase activity, rotational mechanism"/>
    <property type="evidence" value="ECO:0007669"/>
    <property type="project" value="UniProtKB-UniRule"/>
</dbReference>
<dbReference type="GO" id="GO:0046961">
    <property type="term" value="F:proton-transporting ATPase activity, rotational mechanism"/>
    <property type="evidence" value="ECO:0007669"/>
    <property type="project" value="TreeGrafter"/>
</dbReference>
<dbReference type="CDD" id="cd06503">
    <property type="entry name" value="ATP-synt_Fo_b"/>
    <property type="match status" value="1"/>
</dbReference>
<dbReference type="Gene3D" id="6.10.250.1580">
    <property type="match status" value="1"/>
</dbReference>
<dbReference type="HAMAP" id="MF_01398">
    <property type="entry name" value="ATP_synth_b_bprime"/>
    <property type="match status" value="1"/>
</dbReference>
<dbReference type="InterPro" id="IPR028987">
    <property type="entry name" value="ATP_synth_B-like_membr_sf"/>
</dbReference>
<dbReference type="InterPro" id="IPR002146">
    <property type="entry name" value="ATP_synth_b/b'su_bac/chlpt"/>
</dbReference>
<dbReference type="InterPro" id="IPR005864">
    <property type="entry name" value="ATP_synth_F0_bsu_bac"/>
</dbReference>
<dbReference type="InterPro" id="IPR050059">
    <property type="entry name" value="ATP_synthase_B_chain"/>
</dbReference>
<dbReference type="NCBIfam" id="TIGR01144">
    <property type="entry name" value="ATP_synt_b"/>
    <property type="match status" value="1"/>
</dbReference>
<dbReference type="PANTHER" id="PTHR33445:SF1">
    <property type="entry name" value="ATP SYNTHASE SUBUNIT B"/>
    <property type="match status" value="1"/>
</dbReference>
<dbReference type="PANTHER" id="PTHR33445">
    <property type="entry name" value="ATP SYNTHASE SUBUNIT B', CHLOROPLASTIC"/>
    <property type="match status" value="1"/>
</dbReference>
<dbReference type="Pfam" id="PF00430">
    <property type="entry name" value="ATP-synt_B"/>
    <property type="match status" value="1"/>
</dbReference>
<dbReference type="SUPFAM" id="SSF81573">
    <property type="entry name" value="F1F0 ATP synthase subunit B, membrane domain"/>
    <property type="match status" value="1"/>
</dbReference>
<feature type="chain" id="PRO_0000368328" description="ATP synthase subunit b">
    <location>
        <begin position="1"/>
        <end position="168"/>
    </location>
</feature>
<feature type="transmembrane region" description="Helical" evidence="1">
    <location>
        <begin position="9"/>
        <end position="29"/>
    </location>
</feature>